<evidence type="ECO:0000250" key="1"/>
<evidence type="ECO:0000255" key="2"/>
<evidence type="ECO:0000255" key="3">
    <source>
        <dbReference type="PROSITE-ProRule" id="PRU01359"/>
    </source>
</evidence>
<evidence type="ECO:0000256" key="4">
    <source>
        <dbReference type="SAM" id="MobiDB-lite"/>
    </source>
</evidence>
<evidence type="ECO:0000305" key="5"/>
<dbReference type="EMBL" id="AE008922">
    <property type="protein sequence ID" value="AAM39327.1"/>
    <property type="molecule type" value="Genomic_DNA"/>
</dbReference>
<dbReference type="RefSeq" id="NP_635403.1">
    <property type="nucleotide sequence ID" value="NC_003902.1"/>
</dbReference>
<dbReference type="SMR" id="P0C7M1"/>
<dbReference type="STRING" id="190485.XCC0008"/>
<dbReference type="EnsemblBacteria" id="AAM39327">
    <property type="protein sequence ID" value="AAM39327"/>
    <property type="gene ID" value="XCC0008"/>
</dbReference>
<dbReference type="KEGG" id="xcc:XCC0008"/>
<dbReference type="PATRIC" id="fig|190485.4.peg.8"/>
<dbReference type="eggNOG" id="COG0810">
    <property type="taxonomic scope" value="Bacteria"/>
</dbReference>
<dbReference type="HOGENOM" id="CLU_076057_5_0_6"/>
<dbReference type="OrthoDB" id="5956010at2"/>
<dbReference type="Proteomes" id="UP000001010">
    <property type="component" value="Chromosome"/>
</dbReference>
<dbReference type="GO" id="GO:0098797">
    <property type="term" value="C:plasma membrane protein complex"/>
    <property type="evidence" value="ECO:0000318"/>
    <property type="project" value="GO_Central"/>
</dbReference>
<dbReference type="GO" id="GO:0031992">
    <property type="term" value="F:energy transducer activity"/>
    <property type="evidence" value="ECO:0000318"/>
    <property type="project" value="GO_Central"/>
</dbReference>
<dbReference type="GO" id="GO:0015031">
    <property type="term" value="P:protein transport"/>
    <property type="evidence" value="ECO:0007669"/>
    <property type="project" value="UniProtKB-KW"/>
</dbReference>
<dbReference type="GO" id="GO:0055085">
    <property type="term" value="P:transmembrane transport"/>
    <property type="evidence" value="ECO:0007669"/>
    <property type="project" value="InterPro"/>
</dbReference>
<dbReference type="FunFam" id="3.30.1150.10:FF:000010">
    <property type="entry name" value="Energy transducer TonB"/>
    <property type="match status" value="1"/>
</dbReference>
<dbReference type="Gene3D" id="3.30.1150.10">
    <property type="match status" value="1"/>
</dbReference>
<dbReference type="InterPro" id="IPR051045">
    <property type="entry name" value="TonB-dependent_transducer"/>
</dbReference>
<dbReference type="InterPro" id="IPR006260">
    <property type="entry name" value="TonB/TolA_C"/>
</dbReference>
<dbReference type="InterPro" id="IPR037682">
    <property type="entry name" value="TonB_C"/>
</dbReference>
<dbReference type="NCBIfam" id="TIGR01352">
    <property type="entry name" value="tonB_Cterm"/>
    <property type="match status" value="1"/>
</dbReference>
<dbReference type="PANTHER" id="PTHR33446:SF2">
    <property type="entry name" value="PROTEIN TONB"/>
    <property type="match status" value="1"/>
</dbReference>
<dbReference type="PANTHER" id="PTHR33446">
    <property type="entry name" value="PROTEIN TONB-RELATED"/>
    <property type="match status" value="1"/>
</dbReference>
<dbReference type="Pfam" id="PF03544">
    <property type="entry name" value="TonB_C"/>
    <property type="match status" value="1"/>
</dbReference>
<dbReference type="PRINTS" id="PR01217">
    <property type="entry name" value="PRICHEXTENSN"/>
</dbReference>
<dbReference type="SUPFAM" id="SSF74653">
    <property type="entry name" value="TolA/TonB C-terminal domain"/>
    <property type="match status" value="1"/>
</dbReference>
<dbReference type="PROSITE" id="PS52015">
    <property type="entry name" value="TONB_CTD"/>
    <property type="match status" value="1"/>
</dbReference>
<keyword id="KW-0997">Cell inner membrane</keyword>
<keyword id="KW-1003">Cell membrane</keyword>
<keyword id="KW-0472">Membrane</keyword>
<keyword id="KW-0653">Protein transport</keyword>
<keyword id="KW-1185">Reference proteome</keyword>
<keyword id="KW-0677">Repeat</keyword>
<keyword id="KW-0735">Signal-anchor</keyword>
<keyword id="KW-0812">Transmembrane</keyword>
<keyword id="KW-1133">Transmembrane helix</keyword>
<keyword id="KW-0813">Transport</keyword>
<gene>
    <name type="primary">tonB</name>
    <name type="ordered locus">XCC0008</name>
</gene>
<protein>
    <recommendedName>
        <fullName>Protein TonB</fullName>
    </recommendedName>
</protein>
<organism>
    <name type="scientific">Xanthomonas campestris pv. campestris (strain ATCC 33913 / DSM 3586 / NCPPB 528 / LMG 568 / P 25)</name>
    <dbReference type="NCBI Taxonomy" id="190485"/>
    <lineage>
        <taxon>Bacteria</taxon>
        <taxon>Pseudomonadati</taxon>
        <taxon>Pseudomonadota</taxon>
        <taxon>Gammaproteobacteria</taxon>
        <taxon>Lysobacterales</taxon>
        <taxon>Lysobacteraceae</taxon>
        <taxon>Xanthomonas</taxon>
    </lineage>
</organism>
<sequence>MTEQLVIHRHDYDAGNQGLSWARIIGIAFVIALHLTALMMLLIPAVAPKAPAEKERTTMVTLVDAPPPPPPPPPPPPPEDKPPPPVKNLSPPKPSPVPPPPEAPVVDVPEPRPSDIVTPPSPPAPPAPPSDIGASVDISSKNMNPPKYPPAAFRAGVQGEVILIVDVDANGNVTNVSVEKSSRNRDLDRAAMDAARKWKFNASTVNGQKAAGRVRVPVNFALN</sequence>
<comment type="function">
    <text evidence="1">Interacts with outer membrane receptor proteins that carry out high-affinity binding and energy dependent uptake into the periplasmic space of specific substrates. It could act to transduce energy from the cytoplasmic membrane to specific energy-requiring processes in the outer membrane, resulting in the release into the periplasm of ligands bound by these outer membrane proteins (By similarity).</text>
</comment>
<comment type="subunit">
    <text evidence="1">Homodimer. Forms a complex with the accessory proteins ExbB and ExbD (By similarity).</text>
</comment>
<comment type="subcellular location">
    <subcellularLocation>
        <location evidence="1">Cell inner membrane</location>
        <topology evidence="1">Single-pass membrane protein</topology>
        <orientation evidence="1">Periplasmic side</orientation>
    </subcellularLocation>
</comment>
<comment type="similarity">
    <text evidence="5">Belongs to the TonB family.</text>
</comment>
<accession>P0C7M1</accession>
<accession>O34261</accession>
<feature type="chain" id="PRO_0000196212" description="Protein TonB">
    <location>
        <begin position="1"/>
        <end position="223"/>
    </location>
</feature>
<feature type="topological domain" description="Cytoplasmic" evidence="2">
    <location>
        <begin position="1"/>
        <end position="23"/>
    </location>
</feature>
<feature type="transmembrane region" description="Helical; Signal-anchor" evidence="2">
    <location>
        <begin position="24"/>
        <end position="44"/>
    </location>
</feature>
<feature type="topological domain" description="Periplasmic" evidence="2">
    <location>
        <begin position="45"/>
        <end position="223"/>
    </location>
</feature>
<feature type="domain" description="TonB C-terminal" evidence="3">
    <location>
        <begin position="133"/>
        <end position="223"/>
    </location>
</feature>
<feature type="region of interest" description="Disordered" evidence="4">
    <location>
        <begin position="61"/>
        <end position="143"/>
    </location>
</feature>
<feature type="compositionally biased region" description="Pro residues" evidence="4">
    <location>
        <begin position="65"/>
        <end position="103"/>
    </location>
</feature>
<feature type="compositionally biased region" description="Pro residues" evidence="4">
    <location>
        <begin position="119"/>
        <end position="129"/>
    </location>
</feature>
<proteinExistence type="inferred from homology"/>
<name>TONB_XANCP</name>
<reference key="1">
    <citation type="journal article" date="2002" name="Nature">
        <title>Comparison of the genomes of two Xanthomonas pathogens with differing host specificities.</title>
        <authorList>
            <person name="da Silva A.C.R."/>
            <person name="Ferro J.A."/>
            <person name="Reinach F.C."/>
            <person name="Farah C.S."/>
            <person name="Furlan L.R."/>
            <person name="Quaggio R.B."/>
            <person name="Monteiro-Vitorello C.B."/>
            <person name="Van Sluys M.A."/>
            <person name="Almeida N.F. Jr."/>
            <person name="Alves L.M.C."/>
            <person name="do Amaral A.M."/>
            <person name="Bertolini M.C."/>
            <person name="Camargo L.E.A."/>
            <person name="Camarotte G."/>
            <person name="Cannavan F."/>
            <person name="Cardozo J."/>
            <person name="Chambergo F."/>
            <person name="Ciapina L.P."/>
            <person name="Cicarelli R.M.B."/>
            <person name="Coutinho L.L."/>
            <person name="Cursino-Santos J.R."/>
            <person name="El-Dorry H."/>
            <person name="Faria J.B."/>
            <person name="Ferreira A.J.S."/>
            <person name="Ferreira R.C.C."/>
            <person name="Ferro M.I.T."/>
            <person name="Formighieri E.F."/>
            <person name="Franco M.C."/>
            <person name="Greggio C.C."/>
            <person name="Gruber A."/>
            <person name="Katsuyama A.M."/>
            <person name="Kishi L.T."/>
            <person name="Leite R.P."/>
            <person name="Lemos E.G.M."/>
            <person name="Lemos M.V.F."/>
            <person name="Locali E.C."/>
            <person name="Machado M.A."/>
            <person name="Madeira A.M.B.N."/>
            <person name="Martinez-Rossi N.M."/>
            <person name="Martins E.C."/>
            <person name="Meidanis J."/>
            <person name="Menck C.F.M."/>
            <person name="Miyaki C.Y."/>
            <person name="Moon D.H."/>
            <person name="Moreira L.M."/>
            <person name="Novo M.T.M."/>
            <person name="Okura V.K."/>
            <person name="Oliveira M.C."/>
            <person name="Oliveira V.R."/>
            <person name="Pereira H.A."/>
            <person name="Rossi A."/>
            <person name="Sena J.A.D."/>
            <person name="Silva C."/>
            <person name="de Souza R.F."/>
            <person name="Spinola L.A.F."/>
            <person name="Takita M.A."/>
            <person name="Tamura R.E."/>
            <person name="Teixeira E.C."/>
            <person name="Tezza R.I.D."/>
            <person name="Trindade dos Santos M."/>
            <person name="Truffi D."/>
            <person name="Tsai S.M."/>
            <person name="White F.F."/>
            <person name="Setubal J.C."/>
            <person name="Kitajima J.P."/>
        </authorList>
    </citation>
    <scope>NUCLEOTIDE SEQUENCE [LARGE SCALE GENOMIC DNA]</scope>
    <source>
        <strain>ATCC 33913 / DSM 3586 / NCPPB 528 / LMG 568 / P 25</strain>
    </source>
</reference>